<gene>
    <name type="ordered locus">YMR087W</name>
    <name type="ORF">YM9582.12</name>
</gene>
<feature type="chain" id="PRO_0000203285" description="Probable ADP-ribose 1''-phosphate phosphatase YML087W">
    <location>
        <begin position="1"/>
        <end position="284"/>
    </location>
</feature>
<feature type="domain" description="Macro" evidence="2">
    <location>
        <begin position="34"/>
        <end position="230"/>
    </location>
</feature>
<feature type="active site" evidence="1">
    <location>
        <position position="80"/>
    </location>
</feature>
<feature type="active site" evidence="1">
    <location>
        <position position="90"/>
    </location>
</feature>
<feature type="active site" evidence="1">
    <location>
        <position position="145"/>
    </location>
</feature>
<feature type="binding site">
    <location>
        <position position="23"/>
    </location>
    <ligand>
        <name>substrate</name>
    </ligand>
</feature>
<feature type="binding site">
    <location>
        <position position="55"/>
    </location>
    <ligand>
        <name>substrate</name>
    </ligand>
</feature>
<feature type="binding site">
    <location>
        <position position="80"/>
    </location>
    <ligand>
        <name>substrate</name>
    </ligand>
</feature>
<feature type="binding site">
    <location>
        <position position="90"/>
    </location>
    <ligand>
        <name>substrate</name>
    </ligand>
</feature>
<feature type="binding site">
    <location>
        <position position="148"/>
    </location>
    <ligand>
        <name>substrate</name>
    </ligand>
</feature>
<feature type="binding site">
    <location>
        <position position="195"/>
    </location>
    <ligand>
        <name>substrate</name>
    </ligand>
</feature>
<feature type="disulfide bond">
    <location>
        <begin position="128"/>
        <end position="136"/>
    </location>
</feature>
<feature type="strand" evidence="4">
    <location>
        <begin position="18"/>
        <end position="24"/>
    </location>
</feature>
<feature type="helix" evidence="4">
    <location>
        <begin position="26"/>
        <end position="35"/>
    </location>
</feature>
<feature type="strand" evidence="4">
    <location>
        <begin position="47"/>
        <end position="52"/>
    </location>
</feature>
<feature type="helix" evidence="4">
    <location>
        <begin position="54"/>
        <end position="62"/>
    </location>
</feature>
<feature type="strand" evidence="4">
    <location>
        <begin position="73"/>
        <end position="77"/>
    </location>
</feature>
<feature type="helix" evidence="4">
    <location>
        <begin position="89"/>
        <end position="97"/>
    </location>
</feature>
<feature type="helix" evidence="4">
    <location>
        <begin position="100"/>
        <end position="109"/>
    </location>
</feature>
<feature type="turn" evidence="4">
    <location>
        <begin position="110"/>
        <end position="112"/>
    </location>
</feature>
<feature type="strand" evidence="4">
    <location>
        <begin position="121"/>
        <end position="124"/>
    </location>
</feature>
<feature type="helix" evidence="4">
    <location>
        <begin position="125"/>
        <end position="129"/>
    </location>
</feature>
<feature type="strand" evidence="4">
    <location>
        <begin position="140"/>
        <end position="145"/>
    </location>
</feature>
<feature type="strand" evidence="4">
    <location>
        <begin position="152"/>
        <end position="154"/>
    </location>
</feature>
<feature type="helix" evidence="4">
    <location>
        <begin position="162"/>
        <end position="165"/>
    </location>
</feature>
<feature type="helix" evidence="4">
    <location>
        <begin position="167"/>
        <end position="179"/>
    </location>
</feature>
<feature type="strand" evidence="4">
    <location>
        <begin position="186"/>
        <end position="190"/>
    </location>
</feature>
<feature type="strand" evidence="5">
    <location>
        <begin position="193"/>
        <end position="196"/>
    </location>
</feature>
<feature type="helix" evidence="4">
    <location>
        <begin position="202"/>
        <end position="217"/>
    </location>
</feature>
<feature type="helix" evidence="4">
    <location>
        <begin position="219"/>
        <end position="221"/>
    </location>
</feature>
<feature type="helix" evidence="4">
    <location>
        <begin position="224"/>
        <end position="234"/>
    </location>
</feature>
<feature type="helix" evidence="4">
    <location>
        <begin position="240"/>
        <end position="242"/>
    </location>
</feature>
<feature type="helix" evidence="4">
    <location>
        <begin position="245"/>
        <end position="254"/>
    </location>
</feature>
<feature type="helix" evidence="4">
    <location>
        <begin position="258"/>
        <end position="262"/>
    </location>
</feature>
<feature type="turn" evidence="4">
    <location>
        <begin position="266"/>
        <end position="268"/>
    </location>
</feature>
<feature type="helix" evidence="4">
    <location>
        <begin position="271"/>
        <end position="273"/>
    </location>
</feature>
<organism>
    <name type="scientific">Saccharomyces cerevisiae (strain ATCC 204508 / S288c)</name>
    <name type="common">Baker's yeast</name>
    <dbReference type="NCBI Taxonomy" id="559292"/>
    <lineage>
        <taxon>Eukaryota</taxon>
        <taxon>Fungi</taxon>
        <taxon>Dikarya</taxon>
        <taxon>Ascomycota</taxon>
        <taxon>Saccharomycotina</taxon>
        <taxon>Saccharomycetes</taxon>
        <taxon>Saccharomycetales</taxon>
        <taxon>Saccharomycetaceae</taxon>
        <taxon>Saccharomyces</taxon>
    </lineage>
</organism>
<name>YMX7_YEAST</name>
<protein>
    <recommendedName>
        <fullName>Probable ADP-ribose 1''-phosphate phosphatase YML087W</fullName>
        <ecNumber>3.1.3.84</ecNumber>
    </recommendedName>
</protein>
<comment type="function">
    <text>Highly specific phosphatase involved in the metabolism of ADP-ribose 1''-phosphate (Appr1p) which is produced as a consequence of tRNA splicing. + phosphate.</text>
</comment>
<comment type="catalytic activity">
    <reaction>
        <text>ADP-alpha-D-ribose 1''-phosphate + H2O = ADP-D-ribose + phosphate</text>
        <dbReference type="Rhea" id="RHEA:25029"/>
        <dbReference type="ChEBI" id="CHEBI:15377"/>
        <dbReference type="ChEBI" id="CHEBI:43474"/>
        <dbReference type="ChEBI" id="CHEBI:57967"/>
        <dbReference type="ChEBI" id="CHEBI:58753"/>
        <dbReference type="EC" id="3.1.3.84"/>
    </reaction>
</comment>
<comment type="subunit">
    <text evidence="3">Homodimer.</text>
</comment>
<proteinExistence type="evidence at protein level"/>
<evidence type="ECO:0000255" key="1"/>
<evidence type="ECO:0000255" key="2">
    <source>
        <dbReference type="PROSITE-ProRule" id="PRU00490"/>
    </source>
</evidence>
<evidence type="ECO:0000269" key="3">
    <source>
    </source>
</evidence>
<evidence type="ECO:0007829" key="4">
    <source>
        <dbReference type="PDB" id="1NJR"/>
    </source>
</evidence>
<evidence type="ECO:0007829" key="5">
    <source>
        <dbReference type="PDB" id="1TXZ"/>
    </source>
</evidence>
<dbReference type="EC" id="3.1.3.84"/>
<dbReference type="EMBL" id="Z49259">
    <property type="protein sequence ID" value="CAA89234.1"/>
    <property type="molecule type" value="Genomic_DNA"/>
</dbReference>
<dbReference type="EMBL" id="AY558403">
    <property type="protein sequence ID" value="AAS56729.1"/>
    <property type="molecule type" value="Genomic_DNA"/>
</dbReference>
<dbReference type="EMBL" id="BK006946">
    <property type="protein sequence ID" value="DAA09984.1"/>
    <property type="molecule type" value="Genomic_DNA"/>
</dbReference>
<dbReference type="PIR" id="S54463">
    <property type="entry name" value="S54463"/>
</dbReference>
<dbReference type="PDB" id="1NJR">
    <property type="method" value="X-ray"/>
    <property type="resolution" value="1.90 A"/>
    <property type="chains" value="A=1-284"/>
</dbReference>
<dbReference type="PDB" id="1TXZ">
    <property type="method" value="X-ray"/>
    <property type="resolution" value="2.05 A"/>
    <property type="chains" value="A=1-284"/>
</dbReference>
<dbReference type="PDB" id="1TY8">
    <property type="method" value="X-ray"/>
    <property type="resolution" value="2.10 A"/>
    <property type="chains" value="A=1-284"/>
</dbReference>
<dbReference type="PDBsum" id="1NJR"/>
<dbReference type="PDBsum" id="1TXZ"/>
<dbReference type="PDBsum" id="1TY8"/>
<dbReference type="SMR" id="Q04299"/>
<dbReference type="BioGRID" id="35262">
    <property type="interactions" value="40"/>
</dbReference>
<dbReference type="DIP" id="DIP-1320N"/>
<dbReference type="FunCoup" id="Q04299">
    <property type="interactions" value="4"/>
</dbReference>
<dbReference type="IntAct" id="Q04299">
    <property type="interactions" value="1"/>
</dbReference>
<dbReference type="MINT" id="Q04299"/>
<dbReference type="STRING" id="4932.YMR087W"/>
<dbReference type="PaxDb" id="4932-YMR087W"/>
<dbReference type="PeptideAtlas" id="Q04299"/>
<dbReference type="EnsemblFungi" id="YMR087W_mRNA">
    <property type="protein sequence ID" value="YMR087W"/>
    <property type="gene ID" value="YMR087W"/>
</dbReference>
<dbReference type="KEGG" id="sce:YMR087W"/>
<dbReference type="AGR" id="SGD:S000004693"/>
<dbReference type="SGD" id="S000004693">
    <property type="gene designation" value="YMR087W"/>
</dbReference>
<dbReference type="VEuPathDB" id="FungiDB:YMR087W"/>
<dbReference type="eggNOG" id="ENOG502QVAE">
    <property type="taxonomic scope" value="Eukaryota"/>
</dbReference>
<dbReference type="HOGENOM" id="CLU_093588_0_0_1"/>
<dbReference type="InParanoid" id="Q04299"/>
<dbReference type="OMA" id="YIIHCPT"/>
<dbReference type="OrthoDB" id="6082470at2759"/>
<dbReference type="BioCyc" id="YEAST:G3O-32787-MONOMER"/>
<dbReference type="BioGRID-ORCS" id="855112">
    <property type="hits" value="0 hits in 10 CRISPR screens"/>
</dbReference>
<dbReference type="EvolutionaryTrace" id="Q04299"/>
<dbReference type="PRO" id="PR:Q04299"/>
<dbReference type="Proteomes" id="UP000002311">
    <property type="component" value="Chromosome XIII"/>
</dbReference>
<dbReference type="RNAct" id="Q04299">
    <property type="molecule type" value="protein"/>
</dbReference>
<dbReference type="GO" id="GO:0016787">
    <property type="term" value="F:hydrolase activity"/>
    <property type="evidence" value="ECO:0007669"/>
    <property type="project" value="UniProtKB-KW"/>
</dbReference>
<dbReference type="GO" id="GO:0006388">
    <property type="term" value="P:tRNA splicing, via endonucleolytic cleavage and ligation"/>
    <property type="evidence" value="ECO:0000304"/>
    <property type="project" value="SGD"/>
</dbReference>
<dbReference type="CDD" id="cd02900">
    <property type="entry name" value="Macro_Appr_pase"/>
    <property type="match status" value="1"/>
</dbReference>
<dbReference type="Gene3D" id="3.40.220.10">
    <property type="entry name" value="Leucine Aminopeptidase, subunit E, domain 1"/>
    <property type="match status" value="1"/>
</dbReference>
<dbReference type="InterPro" id="IPR028071">
    <property type="entry name" value="Macro-like_dom"/>
</dbReference>
<dbReference type="InterPro" id="IPR002589">
    <property type="entry name" value="Macro_dom"/>
</dbReference>
<dbReference type="InterPro" id="IPR043472">
    <property type="entry name" value="Macro_dom-like"/>
</dbReference>
<dbReference type="Pfam" id="PF14519">
    <property type="entry name" value="Macro_2"/>
    <property type="match status" value="1"/>
</dbReference>
<dbReference type="SMART" id="SM00506">
    <property type="entry name" value="A1pp"/>
    <property type="match status" value="1"/>
</dbReference>
<dbReference type="SUPFAM" id="SSF52949">
    <property type="entry name" value="Macro domain-like"/>
    <property type="match status" value="1"/>
</dbReference>
<dbReference type="PROSITE" id="PS51154">
    <property type="entry name" value="MACRO"/>
    <property type="match status" value="1"/>
</dbReference>
<keyword id="KW-0002">3D-structure</keyword>
<keyword id="KW-1015">Disulfide bond</keyword>
<keyword id="KW-0378">Hydrolase</keyword>
<keyword id="KW-1185">Reference proteome</keyword>
<reference key="1">
    <citation type="journal article" date="1997" name="Nature">
        <title>The nucleotide sequence of Saccharomyces cerevisiae chromosome XIII.</title>
        <authorList>
            <person name="Bowman S."/>
            <person name="Churcher C.M."/>
            <person name="Badcock K."/>
            <person name="Brown D."/>
            <person name="Chillingworth T."/>
            <person name="Connor R."/>
            <person name="Dedman K."/>
            <person name="Devlin K."/>
            <person name="Gentles S."/>
            <person name="Hamlin N."/>
            <person name="Hunt S."/>
            <person name="Jagels K."/>
            <person name="Lye G."/>
            <person name="Moule S."/>
            <person name="Odell C."/>
            <person name="Pearson D."/>
            <person name="Rajandream M.A."/>
            <person name="Rice P."/>
            <person name="Skelton J."/>
            <person name="Walsh S.V."/>
            <person name="Whitehead S."/>
            <person name="Barrell B.G."/>
        </authorList>
    </citation>
    <scope>NUCLEOTIDE SEQUENCE [LARGE SCALE GENOMIC DNA]</scope>
    <source>
        <strain>ATCC 204508 / S288c</strain>
    </source>
</reference>
<reference key="2">
    <citation type="journal article" date="2014" name="G3 (Bethesda)">
        <title>The reference genome sequence of Saccharomyces cerevisiae: Then and now.</title>
        <authorList>
            <person name="Engel S.R."/>
            <person name="Dietrich F.S."/>
            <person name="Fisk D.G."/>
            <person name="Binkley G."/>
            <person name="Balakrishnan R."/>
            <person name="Costanzo M.C."/>
            <person name="Dwight S.S."/>
            <person name="Hitz B.C."/>
            <person name="Karra K."/>
            <person name="Nash R.S."/>
            <person name="Weng S."/>
            <person name="Wong E.D."/>
            <person name="Lloyd P."/>
            <person name="Skrzypek M.S."/>
            <person name="Miyasato S.R."/>
            <person name="Simison M."/>
            <person name="Cherry J.M."/>
        </authorList>
    </citation>
    <scope>GENOME REANNOTATION</scope>
    <source>
        <strain>ATCC 204508 / S288c</strain>
    </source>
</reference>
<reference key="3">
    <citation type="journal article" date="2007" name="Genome Res.">
        <title>Approaching a complete repository of sequence-verified protein-encoding clones for Saccharomyces cerevisiae.</title>
        <authorList>
            <person name="Hu Y."/>
            <person name="Rolfs A."/>
            <person name="Bhullar B."/>
            <person name="Murthy T.V.S."/>
            <person name="Zhu C."/>
            <person name="Berger M.F."/>
            <person name="Camargo A.A."/>
            <person name="Kelley F."/>
            <person name="McCarron S."/>
            <person name="Jepson D."/>
            <person name="Richardson A."/>
            <person name="Raphael J."/>
            <person name="Moreira D."/>
            <person name="Taycher E."/>
            <person name="Zuo D."/>
            <person name="Mohr S."/>
            <person name="Kane M.F."/>
            <person name="Williamson J."/>
            <person name="Simpson A.J.G."/>
            <person name="Bulyk M.L."/>
            <person name="Harlow E."/>
            <person name="Marsischky G."/>
            <person name="Kolodner R.D."/>
            <person name="LaBaer J."/>
        </authorList>
    </citation>
    <scope>NUCLEOTIDE SEQUENCE [GENOMIC DNA]</scope>
    <source>
        <strain>ATCC 204508 / S288c</strain>
    </source>
</reference>
<reference key="4">
    <citation type="journal article" date="2005" name="Protein Sci.">
        <title>Structure and mechanism of ADP-ribose-1''-monophosphatase (Appr-1''-pase), a ubiquitous cellular processing enzyme.</title>
        <authorList>
            <person name="Kumaran D."/>
            <person name="Eswaramoorthy S."/>
            <person name="Studier F.W."/>
            <person name="Swaminathan S."/>
        </authorList>
    </citation>
    <scope>X-RAY CRYSTALLOGRAPHY (1.9 ANGSTROMS) IN COMPLEX WITH ADP-RIBOSE AND XYLITOL</scope>
    <scope>SUBUNIT</scope>
    <scope>PROBABLE FUNCTION</scope>
</reference>
<sequence length="284" mass="32067">MTGSLNRHSLLNGVKKMRIILCDTNEVVTNLWQESIPHAYIQNDKYLCIHHGHLQSLMDSMRKGDAIHHGHSYAIVSPGNSYGYLGGGFDKALYNYFGGKPFETWFRNQLGGRYHTVGSATVVDLQRCLEEKTIECRDGIRYIIHVPTVVAPSAPIFNPQNPLKTGFEPVFNAMWNALMHSPKDIDGLIIPGLCTGYAGVPPIISCKSMAFALRLYMAGDHISKELKNVLIMYYLQYPFEPFFPESCKIECQKLGIDIEMLKSFNVEKDAIELLIPRRILTLDL</sequence>
<accession>Q04299</accession>
<accession>D6VZR0</accession>